<sequence length="475" mass="52953">MSYELVVGLEVHCQLNTNSKAFCGCSTEFGKPANTNVCPVCLALPGALPVLNRRVVEDAVKLGLATDCTVARQSILARKNYFYPDLPKGYQISQFEEPICSEGMVFVDTDEGRKNIRLVRIHIEEDAGKSIHDIGDDTFIDVNRCGVPLLEIVSYPDIRSAGEASSYLQKLRQIIKYLGISDGNMEEGSLRCDANVSVRLTGAEEYGTRTEIKNMNSFKNVEKAIEYEAKRHIDVLENGGTIFQETRLWDADRQETRSMRGKEFAHDYRYFPDPDLVPIEVDEEMLDRLKQELPELPEVRAERFVRETGIPAYDAGVLTSEREVADYFEKVVRACGDAKAASNWVMGEVLRTLKEKNIPVALFSVSPERLGGLLNLIGKGTISTTIAKQVFERMLETGDDAAAIVEKEGLAQISDTTEIETLVQDIIEANPGQVEQYRSGKTRIFGFFVGQCMKAMKGKANPVVVNEILKQKLDG</sequence>
<comment type="function">
    <text evidence="1">Allows the formation of correctly charged Asn-tRNA(Asn) or Gln-tRNA(Gln) through the transamidation of misacylated Asp-tRNA(Asn) or Glu-tRNA(Gln) in organisms which lack either or both of asparaginyl-tRNA or glutaminyl-tRNA synthetases. The reaction takes place in the presence of glutamine and ATP through an activated phospho-Asp-tRNA(Asn) or phospho-Glu-tRNA(Gln).</text>
</comment>
<comment type="catalytic activity">
    <reaction evidence="1">
        <text>L-glutamyl-tRNA(Gln) + L-glutamine + ATP + H2O = L-glutaminyl-tRNA(Gln) + L-glutamate + ADP + phosphate + H(+)</text>
        <dbReference type="Rhea" id="RHEA:17521"/>
        <dbReference type="Rhea" id="RHEA-COMP:9681"/>
        <dbReference type="Rhea" id="RHEA-COMP:9684"/>
        <dbReference type="ChEBI" id="CHEBI:15377"/>
        <dbReference type="ChEBI" id="CHEBI:15378"/>
        <dbReference type="ChEBI" id="CHEBI:29985"/>
        <dbReference type="ChEBI" id="CHEBI:30616"/>
        <dbReference type="ChEBI" id="CHEBI:43474"/>
        <dbReference type="ChEBI" id="CHEBI:58359"/>
        <dbReference type="ChEBI" id="CHEBI:78520"/>
        <dbReference type="ChEBI" id="CHEBI:78521"/>
        <dbReference type="ChEBI" id="CHEBI:456216"/>
    </reaction>
</comment>
<comment type="catalytic activity">
    <reaction evidence="1">
        <text>L-aspartyl-tRNA(Asn) + L-glutamine + ATP + H2O = L-asparaginyl-tRNA(Asn) + L-glutamate + ADP + phosphate + 2 H(+)</text>
        <dbReference type="Rhea" id="RHEA:14513"/>
        <dbReference type="Rhea" id="RHEA-COMP:9674"/>
        <dbReference type="Rhea" id="RHEA-COMP:9677"/>
        <dbReference type="ChEBI" id="CHEBI:15377"/>
        <dbReference type="ChEBI" id="CHEBI:15378"/>
        <dbReference type="ChEBI" id="CHEBI:29985"/>
        <dbReference type="ChEBI" id="CHEBI:30616"/>
        <dbReference type="ChEBI" id="CHEBI:43474"/>
        <dbReference type="ChEBI" id="CHEBI:58359"/>
        <dbReference type="ChEBI" id="CHEBI:78515"/>
        <dbReference type="ChEBI" id="CHEBI:78516"/>
        <dbReference type="ChEBI" id="CHEBI:456216"/>
    </reaction>
</comment>
<comment type="subunit">
    <text evidence="1">Heterotrimer of A, B and C subunits.</text>
</comment>
<comment type="similarity">
    <text evidence="1">Belongs to the GatB/GatE family. GatB subfamily.</text>
</comment>
<dbReference type="EC" id="6.3.5.-" evidence="1"/>
<dbReference type="EMBL" id="CP001101">
    <property type="protein sequence ID" value="ACE05216.1"/>
    <property type="molecule type" value="Genomic_DNA"/>
</dbReference>
<dbReference type="SMR" id="B3EP77"/>
<dbReference type="STRING" id="331678.Cphamn1_2312"/>
<dbReference type="KEGG" id="cpb:Cphamn1_2312"/>
<dbReference type="eggNOG" id="COG0064">
    <property type="taxonomic scope" value="Bacteria"/>
</dbReference>
<dbReference type="HOGENOM" id="CLU_019240_0_0_10"/>
<dbReference type="OrthoDB" id="9804078at2"/>
<dbReference type="GO" id="GO:0050566">
    <property type="term" value="F:asparaginyl-tRNA synthase (glutamine-hydrolyzing) activity"/>
    <property type="evidence" value="ECO:0007669"/>
    <property type="project" value="RHEA"/>
</dbReference>
<dbReference type="GO" id="GO:0005524">
    <property type="term" value="F:ATP binding"/>
    <property type="evidence" value="ECO:0007669"/>
    <property type="project" value="UniProtKB-KW"/>
</dbReference>
<dbReference type="GO" id="GO:0050567">
    <property type="term" value="F:glutaminyl-tRNA synthase (glutamine-hydrolyzing) activity"/>
    <property type="evidence" value="ECO:0007669"/>
    <property type="project" value="UniProtKB-UniRule"/>
</dbReference>
<dbReference type="GO" id="GO:0070681">
    <property type="term" value="P:glutaminyl-tRNAGln biosynthesis via transamidation"/>
    <property type="evidence" value="ECO:0007669"/>
    <property type="project" value="TreeGrafter"/>
</dbReference>
<dbReference type="GO" id="GO:0006412">
    <property type="term" value="P:translation"/>
    <property type="evidence" value="ECO:0007669"/>
    <property type="project" value="UniProtKB-UniRule"/>
</dbReference>
<dbReference type="FunFam" id="1.10.10.410:FF:000001">
    <property type="entry name" value="Aspartyl/glutamyl-tRNA(Asn/Gln) amidotransferase subunit B"/>
    <property type="match status" value="1"/>
</dbReference>
<dbReference type="FunFam" id="1.10.150.380:FF:000001">
    <property type="entry name" value="Aspartyl/glutamyl-tRNA(Asn/Gln) amidotransferase subunit B"/>
    <property type="match status" value="1"/>
</dbReference>
<dbReference type="Gene3D" id="1.10.10.410">
    <property type="match status" value="1"/>
</dbReference>
<dbReference type="Gene3D" id="1.10.150.380">
    <property type="entry name" value="GatB domain, N-terminal subdomain"/>
    <property type="match status" value="1"/>
</dbReference>
<dbReference type="HAMAP" id="MF_00121">
    <property type="entry name" value="GatB"/>
    <property type="match status" value="1"/>
</dbReference>
<dbReference type="InterPro" id="IPR017959">
    <property type="entry name" value="Asn/Gln-tRNA_amidoTrfase_suB/E"/>
</dbReference>
<dbReference type="InterPro" id="IPR006075">
    <property type="entry name" value="Asn/Gln-tRNA_Trfase_suB/E_cat"/>
</dbReference>
<dbReference type="InterPro" id="IPR018027">
    <property type="entry name" value="Asn/Gln_amidotransferase"/>
</dbReference>
<dbReference type="InterPro" id="IPR003789">
    <property type="entry name" value="Asn/Gln_tRNA_amidoTrase-B-like"/>
</dbReference>
<dbReference type="InterPro" id="IPR004413">
    <property type="entry name" value="GatB"/>
</dbReference>
<dbReference type="InterPro" id="IPR042114">
    <property type="entry name" value="GatB_C_1"/>
</dbReference>
<dbReference type="InterPro" id="IPR023168">
    <property type="entry name" value="GatB_Yqey_C_2"/>
</dbReference>
<dbReference type="InterPro" id="IPR017958">
    <property type="entry name" value="Gln-tRNA_amidoTrfase_suB_CS"/>
</dbReference>
<dbReference type="InterPro" id="IPR014746">
    <property type="entry name" value="Gln_synth/guanido_kin_cat_dom"/>
</dbReference>
<dbReference type="NCBIfam" id="TIGR00133">
    <property type="entry name" value="gatB"/>
    <property type="match status" value="1"/>
</dbReference>
<dbReference type="NCBIfam" id="NF004012">
    <property type="entry name" value="PRK05477.1-2"/>
    <property type="match status" value="1"/>
</dbReference>
<dbReference type="NCBIfam" id="NF004014">
    <property type="entry name" value="PRK05477.1-4"/>
    <property type="match status" value="1"/>
</dbReference>
<dbReference type="NCBIfam" id="NF004015">
    <property type="entry name" value="PRK05477.1-5"/>
    <property type="match status" value="1"/>
</dbReference>
<dbReference type="PANTHER" id="PTHR11659">
    <property type="entry name" value="GLUTAMYL-TRNA GLN AMIDOTRANSFERASE SUBUNIT B MITOCHONDRIAL AND PROKARYOTIC PET112-RELATED"/>
    <property type="match status" value="1"/>
</dbReference>
<dbReference type="PANTHER" id="PTHR11659:SF0">
    <property type="entry name" value="GLUTAMYL-TRNA(GLN) AMIDOTRANSFERASE SUBUNIT B, MITOCHONDRIAL"/>
    <property type="match status" value="1"/>
</dbReference>
<dbReference type="Pfam" id="PF02934">
    <property type="entry name" value="GatB_N"/>
    <property type="match status" value="1"/>
</dbReference>
<dbReference type="Pfam" id="PF02637">
    <property type="entry name" value="GatB_Yqey"/>
    <property type="match status" value="1"/>
</dbReference>
<dbReference type="SMART" id="SM00845">
    <property type="entry name" value="GatB_Yqey"/>
    <property type="match status" value="1"/>
</dbReference>
<dbReference type="SUPFAM" id="SSF89095">
    <property type="entry name" value="GatB/YqeY motif"/>
    <property type="match status" value="1"/>
</dbReference>
<dbReference type="SUPFAM" id="SSF55931">
    <property type="entry name" value="Glutamine synthetase/guanido kinase"/>
    <property type="match status" value="1"/>
</dbReference>
<dbReference type="PROSITE" id="PS01234">
    <property type="entry name" value="GATB"/>
    <property type="match status" value="1"/>
</dbReference>
<feature type="chain" id="PRO_1000095198" description="Aspartyl/glutamyl-tRNA(Asn/Gln) amidotransferase subunit B">
    <location>
        <begin position="1"/>
        <end position="475"/>
    </location>
</feature>
<organism>
    <name type="scientific">Chlorobium phaeobacteroides (strain BS1)</name>
    <dbReference type="NCBI Taxonomy" id="331678"/>
    <lineage>
        <taxon>Bacteria</taxon>
        <taxon>Pseudomonadati</taxon>
        <taxon>Chlorobiota</taxon>
        <taxon>Chlorobiia</taxon>
        <taxon>Chlorobiales</taxon>
        <taxon>Chlorobiaceae</taxon>
        <taxon>Chlorobium/Pelodictyon group</taxon>
        <taxon>Chlorobium</taxon>
    </lineage>
</organism>
<evidence type="ECO:0000255" key="1">
    <source>
        <dbReference type="HAMAP-Rule" id="MF_00121"/>
    </source>
</evidence>
<reference key="1">
    <citation type="submission" date="2008-06" db="EMBL/GenBank/DDBJ databases">
        <title>Complete sequence of Chlorobium phaeobacteroides BS1.</title>
        <authorList>
            <consortium name="US DOE Joint Genome Institute"/>
            <person name="Lucas S."/>
            <person name="Copeland A."/>
            <person name="Lapidus A."/>
            <person name="Glavina del Rio T."/>
            <person name="Dalin E."/>
            <person name="Tice H."/>
            <person name="Bruce D."/>
            <person name="Goodwin L."/>
            <person name="Pitluck S."/>
            <person name="Schmutz J."/>
            <person name="Larimer F."/>
            <person name="Land M."/>
            <person name="Hauser L."/>
            <person name="Kyrpides N."/>
            <person name="Ovchinnikova G."/>
            <person name="Li T."/>
            <person name="Liu Z."/>
            <person name="Zhao F."/>
            <person name="Overmann J."/>
            <person name="Bryant D.A."/>
            <person name="Richardson P."/>
        </authorList>
    </citation>
    <scope>NUCLEOTIDE SEQUENCE [LARGE SCALE GENOMIC DNA]</scope>
    <source>
        <strain>BS1</strain>
    </source>
</reference>
<gene>
    <name evidence="1" type="primary">gatB</name>
    <name type="ordered locus">Cphamn1_2312</name>
</gene>
<proteinExistence type="inferred from homology"/>
<keyword id="KW-0067">ATP-binding</keyword>
<keyword id="KW-0436">Ligase</keyword>
<keyword id="KW-0547">Nucleotide-binding</keyword>
<keyword id="KW-0648">Protein biosynthesis</keyword>
<name>GATB_CHLPB</name>
<protein>
    <recommendedName>
        <fullName evidence="1">Aspartyl/glutamyl-tRNA(Asn/Gln) amidotransferase subunit B</fullName>
        <shortName evidence="1">Asp/Glu-ADT subunit B</shortName>
        <ecNumber evidence="1">6.3.5.-</ecNumber>
    </recommendedName>
</protein>
<accession>B3EP77</accession>